<feature type="chain" id="PRO_0000309348" description="Phthiodiolone/phenolphthiodiolone dimycocerosates ketoreductase">
    <location>
        <begin position="1"/>
        <end position="381"/>
    </location>
</feature>
<dbReference type="EC" id="1.2.-.-"/>
<dbReference type="EMBL" id="AM408590">
    <property type="protein sequence ID" value="CAL72961.1"/>
    <property type="molecule type" value="Genomic_DNA"/>
</dbReference>
<dbReference type="RefSeq" id="WP_003414891.1">
    <property type="nucleotide sequence ID" value="NC_008769.1"/>
</dbReference>
<dbReference type="SMR" id="A1KMU5"/>
<dbReference type="KEGG" id="mbb:BCG_2972c"/>
<dbReference type="HOGENOM" id="CLU_027853_5_3_11"/>
<dbReference type="Proteomes" id="UP000001472">
    <property type="component" value="Chromosome"/>
</dbReference>
<dbReference type="GO" id="GO:0016705">
    <property type="term" value="F:oxidoreductase activity, acting on paired donors, with incorporation or reduction of molecular oxygen"/>
    <property type="evidence" value="ECO:0007669"/>
    <property type="project" value="InterPro"/>
</dbReference>
<dbReference type="GO" id="GO:0006629">
    <property type="term" value="P:lipid metabolic process"/>
    <property type="evidence" value="ECO:0007669"/>
    <property type="project" value="UniProtKB-KW"/>
</dbReference>
<dbReference type="CDD" id="cd01097">
    <property type="entry name" value="Tetrahydromethanopterin_reductase"/>
    <property type="match status" value="1"/>
</dbReference>
<dbReference type="FunFam" id="3.20.20.30:FF:000015">
    <property type="entry name" value="Phthiodiolone/phenolphthiodiolone dimycocerosates ketoreductase"/>
    <property type="match status" value="1"/>
</dbReference>
<dbReference type="Gene3D" id="3.20.20.30">
    <property type="entry name" value="Luciferase-like domain"/>
    <property type="match status" value="1"/>
</dbReference>
<dbReference type="InterPro" id="IPR050564">
    <property type="entry name" value="F420-G6PD/mer"/>
</dbReference>
<dbReference type="InterPro" id="IPR011251">
    <property type="entry name" value="Luciferase-like_dom"/>
</dbReference>
<dbReference type="InterPro" id="IPR036661">
    <property type="entry name" value="Luciferase-like_sf"/>
</dbReference>
<dbReference type="PANTHER" id="PTHR43244">
    <property type="match status" value="1"/>
</dbReference>
<dbReference type="PANTHER" id="PTHR43244:SF1">
    <property type="entry name" value="5,10-METHYLENETETRAHYDROMETHANOPTERIN REDUCTASE"/>
    <property type="match status" value="1"/>
</dbReference>
<dbReference type="Pfam" id="PF00296">
    <property type="entry name" value="Bac_luciferase"/>
    <property type="match status" value="1"/>
</dbReference>
<dbReference type="SUPFAM" id="SSF51679">
    <property type="entry name" value="Bacterial luciferase-like"/>
    <property type="match status" value="1"/>
</dbReference>
<protein>
    <recommendedName>
        <fullName>Phthiodiolone/phenolphthiodiolone dimycocerosates ketoreductase</fullName>
        <ecNumber>1.2.-.-</ecNumber>
    </recommendedName>
</protein>
<proteinExistence type="inferred from homology"/>
<gene>
    <name type="ordered locus">BCG_2972c</name>
</gene>
<comment type="function">
    <text evidence="1">Catalyzes the reduction of the keto moiety of phthiodiolone dimycocerosates (DIM B) and glycosylated phenolphthiodiolone dimycocerosates to form the intermediate compounds phthiotriol and glycosylated phenolphthiotriol dimycocerosates during phthiocerol dimycocerosates (DIM A) and glycosylated phenolphthiocerol dimycocerosates (PGL) biosynthesis.</text>
</comment>
<comment type="similarity">
    <text evidence="2">Belongs to the mer family. Phthiodiolone/phenolphthiodiolone dimycocerosates ketoreductase subfamily.</text>
</comment>
<name>PHKR_MYCBP</name>
<sequence>MGGLRFGFVDALVHSRLPPTLPARSSMAAATVMGADSYWVGDHLNALVPRSIATSEYLGIAAKFVPKIDANYEPWTMLGNLAFGLPSRLRLGVCVTDAGRRNPAVTAQAAATLHLLTRGRAILGIGVGEREGNEPYGVEWTKPVARFEEALATIRALWNSNGELISRESPYFPLHNALFDLPPYRGKWPEIWVAAHGPRMLRATGRYADAWIPIVVVRPSDYSRALEAVRSAASDAGRDPMSITPAAVRGIITGRNRDDVEEALESVVVKMTALGVPGEAWARHGVEHPMGADFSGVQDIIPQTMDKQTVLSYAAKVPAALMKEVVFSGTPDEVIDQVAEWRDHGLRYVVLINGSLVNPSLRKTVTAVLPHAKVLRGLKKL</sequence>
<evidence type="ECO:0000250" key="1"/>
<evidence type="ECO:0000305" key="2"/>
<organism>
    <name type="scientific">Mycobacterium bovis (strain BCG / Pasteur 1173P2)</name>
    <dbReference type="NCBI Taxonomy" id="410289"/>
    <lineage>
        <taxon>Bacteria</taxon>
        <taxon>Bacillati</taxon>
        <taxon>Actinomycetota</taxon>
        <taxon>Actinomycetes</taxon>
        <taxon>Mycobacteriales</taxon>
        <taxon>Mycobacteriaceae</taxon>
        <taxon>Mycobacterium</taxon>
        <taxon>Mycobacterium tuberculosis complex</taxon>
    </lineage>
</organism>
<keyword id="KW-0444">Lipid biosynthesis</keyword>
<keyword id="KW-0443">Lipid metabolism</keyword>
<keyword id="KW-0560">Oxidoreductase</keyword>
<accession>A1KMU5</accession>
<reference key="1">
    <citation type="journal article" date="2007" name="Proc. Natl. Acad. Sci. U.S.A.">
        <title>Genome plasticity of BCG and impact on vaccine efficacy.</title>
        <authorList>
            <person name="Brosch R."/>
            <person name="Gordon S.V."/>
            <person name="Garnier T."/>
            <person name="Eiglmeier K."/>
            <person name="Frigui W."/>
            <person name="Valenti P."/>
            <person name="Dos Santos S."/>
            <person name="Duthoy S."/>
            <person name="Lacroix C."/>
            <person name="Garcia-Pelayo C."/>
            <person name="Inwald J.K."/>
            <person name="Golby P."/>
            <person name="Garcia J.N."/>
            <person name="Hewinson R.G."/>
            <person name="Behr M.A."/>
            <person name="Quail M.A."/>
            <person name="Churcher C."/>
            <person name="Barrell B.G."/>
            <person name="Parkhill J."/>
            <person name="Cole S.T."/>
        </authorList>
    </citation>
    <scope>NUCLEOTIDE SEQUENCE [LARGE SCALE GENOMIC DNA]</scope>
    <source>
        <strain>BCG / Pasteur 1173P2</strain>
    </source>
</reference>